<feature type="chain" id="PRO_0000244096" description="Transmembrane protein 266">
    <location>
        <begin position="1"/>
        <end position="538"/>
    </location>
</feature>
<feature type="topological domain" description="Cytoplasmic" evidence="7">
    <location>
        <begin position="1"/>
        <end position="102"/>
    </location>
</feature>
<feature type="transmembrane region" description="Helical; Name=Segment S1" evidence="2">
    <location>
        <begin position="103"/>
        <end position="123"/>
    </location>
</feature>
<feature type="topological domain" description="Extracellular" evidence="7">
    <location>
        <begin position="124"/>
        <end position="130"/>
    </location>
</feature>
<feature type="transmembrane region" description="Helical; Name=Segment S2" evidence="2">
    <location>
        <begin position="131"/>
        <end position="151"/>
    </location>
</feature>
<feature type="topological domain" description="Cytoplasmic" evidence="7">
    <location>
        <begin position="152"/>
        <end position="169"/>
    </location>
</feature>
<feature type="transmembrane region" description="Helical; Name=Segment S3" evidence="2">
    <location>
        <begin position="170"/>
        <end position="190"/>
    </location>
</feature>
<feature type="topological domain" description="Extracellular" evidence="7">
    <location>
        <begin position="191"/>
        <end position="199"/>
    </location>
</feature>
<feature type="transmembrane region" description="Helical; Name=Segment S4" evidence="1">
    <location>
        <begin position="200"/>
        <end position="220"/>
    </location>
</feature>
<feature type="topological domain" description="Cytoplasmic" evidence="7">
    <location>
        <begin position="221"/>
        <end position="538"/>
    </location>
</feature>
<feature type="region of interest" description="Disordered" evidence="3">
    <location>
        <begin position="380"/>
        <end position="435"/>
    </location>
</feature>
<feature type="region of interest" description="Disordered" evidence="3">
    <location>
        <begin position="453"/>
        <end position="483"/>
    </location>
</feature>
<feature type="coiled-coil region" evidence="2">
    <location>
        <begin position="232"/>
        <end position="278"/>
    </location>
</feature>
<feature type="compositionally biased region" description="Low complexity" evidence="3">
    <location>
        <begin position="381"/>
        <end position="396"/>
    </location>
</feature>
<feature type="compositionally biased region" description="Polar residues" evidence="3">
    <location>
        <begin position="397"/>
        <end position="417"/>
    </location>
</feature>
<feature type="compositionally biased region" description="Low complexity" evidence="3">
    <location>
        <begin position="425"/>
        <end position="434"/>
    </location>
</feature>
<feature type="splice variant" id="VSP_022109" description="In isoform 2." evidence="6">
    <location>
        <begin position="1"/>
        <end position="65"/>
    </location>
</feature>
<feature type="splice variant" id="VSP_022110" description="In isoform 2." evidence="6">
    <original>SNLDEEYQREG</original>
    <variation>MMLFQPHRAFR</variation>
    <location>
        <begin position="66"/>
        <end position="76"/>
    </location>
</feature>
<feature type="splice variant" id="VSP_019514" description="In isoform 2." evidence="6">
    <original>DSGAPEPAVCVVTTAAIDIHQPN</original>
    <variation>GKSGLGLFACTMQPQDTCDPSKP</variation>
    <location>
        <begin position="341"/>
        <end position="363"/>
    </location>
</feature>
<feature type="splice variant" id="VSP_019515" description="In isoform 2." evidence="6">
    <location>
        <begin position="364"/>
        <end position="538"/>
    </location>
</feature>
<feature type="mutagenesis site" description="Loss of homodimerization." evidence="5">
    <original>C</original>
    <variation>A</variation>
    <location>
        <position position="252"/>
    </location>
</feature>
<feature type="helix" evidence="10">
    <location>
        <begin position="227"/>
        <end position="279"/>
    </location>
</feature>
<name>TM266_MOUSE</name>
<keyword id="KW-0002">3D-structure</keyword>
<keyword id="KW-0025">Alternative splicing</keyword>
<keyword id="KW-1003">Cell membrane</keyword>
<keyword id="KW-0966">Cell projection</keyword>
<keyword id="KW-0175">Coiled coil</keyword>
<keyword id="KW-1015">Disulfide bond</keyword>
<keyword id="KW-0472">Membrane</keyword>
<keyword id="KW-1185">Reference proteome</keyword>
<keyword id="KW-0812">Transmembrane</keyword>
<keyword id="KW-1133">Transmembrane helix</keyword>
<reference key="1">
    <citation type="journal article" date="2005" name="Science">
        <title>The transcriptional landscape of the mammalian genome.</title>
        <authorList>
            <person name="Carninci P."/>
            <person name="Kasukawa T."/>
            <person name="Katayama S."/>
            <person name="Gough J."/>
            <person name="Frith M.C."/>
            <person name="Maeda N."/>
            <person name="Oyama R."/>
            <person name="Ravasi T."/>
            <person name="Lenhard B."/>
            <person name="Wells C."/>
            <person name="Kodzius R."/>
            <person name="Shimokawa K."/>
            <person name="Bajic V.B."/>
            <person name="Brenner S.E."/>
            <person name="Batalov S."/>
            <person name="Forrest A.R."/>
            <person name="Zavolan M."/>
            <person name="Davis M.J."/>
            <person name="Wilming L.G."/>
            <person name="Aidinis V."/>
            <person name="Allen J.E."/>
            <person name="Ambesi-Impiombato A."/>
            <person name="Apweiler R."/>
            <person name="Aturaliya R.N."/>
            <person name="Bailey T.L."/>
            <person name="Bansal M."/>
            <person name="Baxter L."/>
            <person name="Beisel K.W."/>
            <person name="Bersano T."/>
            <person name="Bono H."/>
            <person name="Chalk A.M."/>
            <person name="Chiu K.P."/>
            <person name="Choudhary V."/>
            <person name="Christoffels A."/>
            <person name="Clutterbuck D.R."/>
            <person name="Crowe M.L."/>
            <person name="Dalla E."/>
            <person name="Dalrymple B.P."/>
            <person name="de Bono B."/>
            <person name="Della Gatta G."/>
            <person name="di Bernardo D."/>
            <person name="Down T."/>
            <person name="Engstrom P."/>
            <person name="Fagiolini M."/>
            <person name="Faulkner G."/>
            <person name="Fletcher C.F."/>
            <person name="Fukushima T."/>
            <person name="Furuno M."/>
            <person name="Futaki S."/>
            <person name="Gariboldi M."/>
            <person name="Georgii-Hemming P."/>
            <person name="Gingeras T.R."/>
            <person name="Gojobori T."/>
            <person name="Green R.E."/>
            <person name="Gustincich S."/>
            <person name="Harbers M."/>
            <person name="Hayashi Y."/>
            <person name="Hensch T.K."/>
            <person name="Hirokawa N."/>
            <person name="Hill D."/>
            <person name="Huminiecki L."/>
            <person name="Iacono M."/>
            <person name="Ikeo K."/>
            <person name="Iwama A."/>
            <person name="Ishikawa T."/>
            <person name="Jakt M."/>
            <person name="Kanapin A."/>
            <person name="Katoh M."/>
            <person name="Kawasawa Y."/>
            <person name="Kelso J."/>
            <person name="Kitamura H."/>
            <person name="Kitano H."/>
            <person name="Kollias G."/>
            <person name="Krishnan S.P."/>
            <person name="Kruger A."/>
            <person name="Kummerfeld S.K."/>
            <person name="Kurochkin I.V."/>
            <person name="Lareau L.F."/>
            <person name="Lazarevic D."/>
            <person name="Lipovich L."/>
            <person name="Liu J."/>
            <person name="Liuni S."/>
            <person name="McWilliam S."/>
            <person name="Madan Babu M."/>
            <person name="Madera M."/>
            <person name="Marchionni L."/>
            <person name="Matsuda H."/>
            <person name="Matsuzawa S."/>
            <person name="Miki H."/>
            <person name="Mignone F."/>
            <person name="Miyake S."/>
            <person name="Morris K."/>
            <person name="Mottagui-Tabar S."/>
            <person name="Mulder N."/>
            <person name="Nakano N."/>
            <person name="Nakauchi H."/>
            <person name="Ng P."/>
            <person name="Nilsson R."/>
            <person name="Nishiguchi S."/>
            <person name="Nishikawa S."/>
            <person name="Nori F."/>
            <person name="Ohara O."/>
            <person name="Okazaki Y."/>
            <person name="Orlando V."/>
            <person name="Pang K.C."/>
            <person name="Pavan W.J."/>
            <person name="Pavesi G."/>
            <person name="Pesole G."/>
            <person name="Petrovsky N."/>
            <person name="Piazza S."/>
            <person name="Reed J."/>
            <person name="Reid J.F."/>
            <person name="Ring B.Z."/>
            <person name="Ringwald M."/>
            <person name="Rost B."/>
            <person name="Ruan Y."/>
            <person name="Salzberg S.L."/>
            <person name="Sandelin A."/>
            <person name="Schneider C."/>
            <person name="Schoenbach C."/>
            <person name="Sekiguchi K."/>
            <person name="Semple C.A."/>
            <person name="Seno S."/>
            <person name="Sessa L."/>
            <person name="Sheng Y."/>
            <person name="Shibata Y."/>
            <person name="Shimada H."/>
            <person name="Shimada K."/>
            <person name="Silva D."/>
            <person name="Sinclair B."/>
            <person name="Sperling S."/>
            <person name="Stupka E."/>
            <person name="Sugiura K."/>
            <person name="Sultana R."/>
            <person name="Takenaka Y."/>
            <person name="Taki K."/>
            <person name="Tammoja K."/>
            <person name="Tan S.L."/>
            <person name="Tang S."/>
            <person name="Taylor M.S."/>
            <person name="Tegner J."/>
            <person name="Teichmann S.A."/>
            <person name="Ueda H.R."/>
            <person name="van Nimwegen E."/>
            <person name="Verardo R."/>
            <person name="Wei C.L."/>
            <person name="Yagi K."/>
            <person name="Yamanishi H."/>
            <person name="Zabarovsky E."/>
            <person name="Zhu S."/>
            <person name="Zimmer A."/>
            <person name="Hide W."/>
            <person name="Bult C."/>
            <person name="Grimmond S.M."/>
            <person name="Teasdale R.D."/>
            <person name="Liu E.T."/>
            <person name="Brusic V."/>
            <person name="Quackenbush J."/>
            <person name="Wahlestedt C."/>
            <person name="Mattick J.S."/>
            <person name="Hume D.A."/>
            <person name="Kai C."/>
            <person name="Sasaki D."/>
            <person name="Tomaru Y."/>
            <person name="Fukuda S."/>
            <person name="Kanamori-Katayama M."/>
            <person name="Suzuki M."/>
            <person name="Aoki J."/>
            <person name="Arakawa T."/>
            <person name="Iida J."/>
            <person name="Imamura K."/>
            <person name="Itoh M."/>
            <person name="Kato T."/>
            <person name="Kawaji H."/>
            <person name="Kawagashira N."/>
            <person name="Kawashima T."/>
            <person name="Kojima M."/>
            <person name="Kondo S."/>
            <person name="Konno H."/>
            <person name="Nakano K."/>
            <person name="Ninomiya N."/>
            <person name="Nishio T."/>
            <person name="Okada M."/>
            <person name="Plessy C."/>
            <person name="Shibata K."/>
            <person name="Shiraki T."/>
            <person name="Suzuki S."/>
            <person name="Tagami M."/>
            <person name="Waki K."/>
            <person name="Watahiki A."/>
            <person name="Okamura-Oho Y."/>
            <person name="Suzuki H."/>
            <person name="Kawai J."/>
            <person name="Hayashizaki Y."/>
        </authorList>
    </citation>
    <scope>NUCLEOTIDE SEQUENCE [LARGE SCALE MRNA] (ISOFORM 1)</scope>
    <source>
        <strain>C57BL/6J</strain>
        <tissue>Cerebellum</tissue>
    </source>
</reference>
<reference key="2">
    <citation type="journal article" date="2009" name="PLoS Biol.">
        <title>Lineage-specific biology revealed by a finished genome assembly of the mouse.</title>
        <authorList>
            <person name="Church D.M."/>
            <person name="Goodstadt L."/>
            <person name="Hillier L.W."/>
            <person name="Zody M.C."/>
            <person name="Goldstein S."/>
            <person name="She X."/>
            <person name="Bult C.J."/>
            <person name="Agarwala R."/>
            <person name="Cherry J.L."/>
            <person name="DiCuccio M."/>
            <person name="Hlavina W."/>
            <person name="Kapustin Y."/>
            <person name="Meric P."/>
            <person name="Maglott D."/>
            <person name="Birtle Z."/>
            <person name="Marques A.C."/>
            <person name="Graves T."/>
            <person name="Zhou S."/>
            <person name="Teague B."/>
            <person name="Potamousis K."/>
            <person name="Churas C."/>
            <person name="Place M."/>
            <person name="Herschleb J."/>
            <person name="Runnheim R."/>
            <person name="Forrest D."/>
            <person name="Amos-Landgraf J."/>
            <person name="Schwartz D.C."/>
            <person name="Cheng Z."/>
            <person name="Lindblad-Toh K."/>
            <person name="Eichler E.E."/>
            <person name="Ponting C.P."/>
        </authorList>
    </citation>
    <scope>NUCLEOTIDE SEQUENCE [LARGE SCALE GENOMIC DNA]</scope>
    <source>
        <strain>C57BL/6J</strain>
    </source>
</reference>
<reference key="3">
    <citation type="journal article" date="2004" name="Genome Res.">
        <title>The status, quality, and expansion of the NIH full-length cDNA project: the Mammalian Gene Collection (MGC).</title>
        <authorList>
            <consortium name="The MGC Project Team"/>
        </authorList>
    </citation>
    <scope>NUCLEOTIDE SEQUENCE [LARGE SCALE MRNA] (ISOFORM 2)</scope>
    <source>
        <strain>C57BL/6J</strain>
        <tissue>Embryonic brain</tissue>
    </source>
</reference>
<reference key="4">
    <citation type="journal article" date="2010" name="Cell">
        <title>A tissue-specific atlas of mouse protein phosphorylation and expression.</title>
        <authorList>
            <person name="Huttlin E.L."/>
            <person name="Jedrychowski M.P."/>
            <person name="Elias J.E."/>
            <person name="Goswami T."/>
            <person name="Rad R."/>
            <person name="Beausoleil S.A."/>
            <person name="Villen J."/>
            <person name="Haas W."/>
            <person name="Sowa M.E."/>
            <person name="Gygi S.P."/>
        </authorList>
    </citation>
    <scope>IDENTIFICATION BY MASS SPECTROMETRY [LARGE SCALE ANALYSIS]</scope>
    <source>
        <tissue>Brain</tissue>
    </source>
</reference>
<reference key="5">
    <citation type="journal article" date="2014" name="PLoS ONE">
        <title>Evidence for functional diversity between the voltage-gated proton channel Hv1 and its closest related protein HVRP1.</title>
        <authorList>
            <person name="Kim I.H."/>
            <person name="Hevezi P."/>
            <person name="Varga C."/>
            <person name="Pathak M.M."/>
            <person name="Hong L."/>
            <person name="Ta D."/>
            <person name="Tran C.T."/>
            <person name="Zlotnik A."/>
            <person name="Soltesz I."/>
            <person name="Tombola F."/>
        </authorList>
    </citation>
    <scope>SUBCELLULAR LOCATION</scope>
    <scope>TISSUE SPECIFICITY</scope>
</reference>
<reference evidence="9" key="6">
    <citation type="journal article" date="2022" name="Biochem. J.">
        <title>Insight into the function of a unique voltage-sensor protein (TMEM266) and its short form in mouse cerebellum.</title>
        <authorList>
            <person name="Kawai T."/>
            <person name="Narita H."/>
            <person name="Konno K."/>
            <person name="Akter S."/>
            <person name="Andriani R.T."/>
            <person name="Iwasaki H."/>
            <person name="Nishikawa S."/>
            <person name="Yokoi N."/>
            <person name="Fukata Y."/>
            <person name="Fukata M."/>
            <person name="Wiriyasermkul P."/>
            <person name="Kongpracha P."/>
            <person name="Nagamori S."/>
            <person name="Takao K."/>
            <person name="Miyakawa T."/>
            <person name="Abe M."/>
            <person name="Sakimura K."/>
            <person name="Watanabe M."/>
            <person name="Nakagawa A."/>
            <person name="Okamura Y."/>
        </authorList>
    </citation>
    <scope>X-RAY CRYSTALLOGRAPHY (2.30 ANGSTROMS) OF 223-283</scope>
    <scope>SUBCELLULAR LOCATION (ISOFORMS 1 AND 2)</scope>
    <scope>SUBUNIT (ISOFORMS 1 AND 2)</scope>
    <scope>TISSUE SPECIFICITY (ISOFORMS 1 AND 2)</scope>
    <scope>DISRUPTION PHENOTYPE</scope>
    <scope>DOMAIN</scope>
    <scope>MUTAGENESIS OF CYS-252</scope>
</reference>
<sequence length="538" mass="58897">MALVTSFNMANPQPAIEGGISEVEIISQQVDEETKSIAPVQLVNFAYRDLPLAAVDLSTGGSQLLSNLDEEYQREGSDWLKPCCGKRAAVWQVFLLSASLNSFLVACVILVVILLTLELLIDTKLLQFSNAFQFAGVIHWISLVILSVFFSETVLRIVVLGIWDYIENKIEVFDGAVIILSLAPMVASTVANGPRSPWDAISLIIMFRIWRVKRVIDAYVLPVKLEMEMVTQQYEKAKAIQDEQLERLTQICQEQGFEIRQLRAHLAQQDLDLAAEREAALQAPHVLSQPRSRYKVVEAGTWAEETAAESIVEELRPSQEATVKDDMNSYISQYYNGPSSDSGAPEPAVCVVTTAAIDIHQPNVPSDLFSVDLPLKLSGNSTCASATSETTSHSTCGSVTRAQSASSQTLGSSTDCSTPREELLPSKPRSSPLPLLLPPQQLVAEATVQDLMSSLSKDPCPSHKALDPAPLAQPTPLGSVQTSPELEHRVSLFNQKNQEALPVLQINPVIHLQPTAGLEEKFRSLESKEPKLHTVPEA</sequence>
<proteinExistence type="evidence at protein level"/>
<evidence type="ECO:0000250" key="1">
    <source>
        <dbReference type="UniProtKB" id="Q2M3C6"/>
    </source>
</evidence>
<evidence type="ECO:0000255" key="2"/>
<evidence type="ECO:0000256" key="3">
    <source>
        <dbReference type="SAM" id="MobiDB-lite"/>
    </source>
</evidence>
<evidence type="ECO:0000269" key="4">
    <source>
    </source>
</evidence>
<evidence type="ECO:0000269" key="5">
    <source>
    </source>
</evidence>
<evidence type="ECO:0000303" key="6">
    <source>
    </source>
</evidence>
<evidence type="ECO:0000305" key="7"/>
<evidence type="ECO:0000312" key="8">
    <source>
        <dbReference type="MGI" id="MGI:2142980"/>
    </source>
</evidence>
<evidence type="ECO:0007744" key="9">
    <source>
        <dbReference type="PDB" id="7WJT"/>
    </source>
</evidence>
<evidence type="ECO:0007829" key="10">
    <source>
        <dbReference type="PDB" id="7WJT"/>
    </source>
</evidence>
<dbReference type="EMBL" id="AK036040">
    <property type="protein sequence ID" value="BAC29283.1"/>
    <property type="molecule type" value="mRNA"/>
</dbReference>
<dbReference type="EMBL" id="CT025532">
    <property type="status" value="NOT_ANNOTATED_CDS"/>
    <property type="molecule type" value="Genomic_DNA"/>
</dbReference>
<dbReference type="EMBL" id="BC068128">
    <property type="protein sequence ID" value="AAH68128.1"/>
    <property type="molecule type" value="mRNA"/>
</dbReference>
<dbReference type="CCDS" id="CCDS23203.1">
    <molecule id="Q8BZB3-1"/>
</dbReference>
<dbReference type="RefSeq" id="NP_766511.1">
    <molecule id="Q8BZB3-1"/>
    <property type="nucleotide sequence ID" value="NM_172923.5"/>
</dbReference>
<dbReference type="RefSeq" id="XP_011241048.1">
    <property type="nucleotide sequence ID" value="XM_011242746.2"/>
</dbReference>
<dbReference type="PDB" id="7WJT">
    <property type="method" value="X-ray"/>
    <property type="resolution" value="2.30 A"/>
    <property type="chains" value="A/B/C/D=223-283"/>
</dbReference>
<dbReference type="PDBsum" id="7WJT"/>
<dbReference type="SMR" id="Q8BZB3"/>
<dbReference type="FunCoup" id="Q8BZB3">
    <property type="interactions" value="214"/>
</dbReference>
<dbReference type="STRING" id="10090.ENSMUSP00000034862"/>
<dbReference type="GlyGen" id="Q8BZB3">
    <property type="glycosylation" value="2 sites, 1 O-linked glycan (2 sites)"/>
</dbReference>
<dbReference type="iPTMnet" id="Q8BZB3"/>
<dbReference type="PhosphoSitePlus" id="Q8BZB3"/>
<dbReference type="SwissPalm" id="Q8BZB3"/>
<dbReference type="PaxDb" id="10090-ENSMUSP00000034862"/>
<dbReference type="PeptideAtlas" id="Q8BZB3"/>
<dbReference type="ProteomicsDB" id="260697">
    <molecule id="Q8BZB3-1"/>
</dbReference>
<dbReference type="ProteomicsDB" id="260698">
    <molecule id="Q8BZB3-2"/>
</dbReference>
<dbReference type="Antibodypedia" id="27411">
    <property type="antibodies" value="103 antibodies from 20 providers"/>
</dbReference>
<dbReference type="DNASU" id="244886"/>
<dbReference type="Ensembl" id="ENSMUST00000034862.5">
    <molecule id="Q8BZB3-1"/>
    <property type="protein sequence ID" value="ENSMUSP00000034862.5"/>
    <property type="gene ID" value="ENSMUSG00000032313.12"/>
</dbReference>
<dbReference type="Ensembl" id="ENSMUST00000085754.10">
    <molecule id="Q8BZB3-2"/>
    <property type="protein sequence ID" value="ENSMUSP00000082906.4"/>
    <property type="gene ID" value="ENSMUSG00000032313.12"/>
</dbReference>
<dbReference type="GeneID" id="244886"/>
<dbReference type="KEGG" id="mmu:244886"/>
<dbReference type="UCSC" id="uc009psj.1">
    <molecule id="Q8BZB3-2"/>
    <property type="organism name" value="mouse"/>
</dbReference>
<dbReference type="UCSC" id="uc009psk.1">
    <molecule id="Q8BZB3-1"/>
    <property type="organism name" value="mouse"/>
</dbReference>
<dbReference type="AGR" id="MGI:2142980"/>
<dbReference type="CTD" id="123591"/>
<dbReference type="MGI" id="MGI:2142980">
    <property type="gene designation" value="Tmem266"/>
</dbReference>
<dbReference type="VEuPathDB" id="HostDB:ENSMUSG00000032313"/>
<dbReference type="eggNOG" id="ENOG502QRI0">
    <property type="taxonomic scope" value="Eukaryota"/>
</dbReference>
<dbReference type="GeneTree" id="ENSGT00940000156738"/>
<dbReference type="HOGENOM" id="CLU_933712_0_0_1"/>
<dbReference type="InParanoid" id="Q8BZB3"/>
<dbReference type="OMA" id="FQFATII"/>
<dbReference type="OrthoDB" id="427456at2759"/>
<dbReference type="PhylomeDB" id="Q8BZB3"/>
<dbReference type="TreeFam" id="TF332271"/>
<dbReference type="BioGRID-ORCS" id="244886">
    <property type="hits" value="0 hits in 45 CRISPR screens"/>
</dbReference>
<dbReference type="PRO" id="PR:Q8BZB3"/>
<dbReference type="Proteomes" id="UP000000589">
    <property type="component" value="Chromosome 9"/>
</dbReference>
<dbReference type="RNAct" id="Q8BZB3">
    <property type="molecule type" value="protein"/>
</dbReference>
<dbReference type="Bgee" id="ENSMUSG00000032313">
    <property type="expression patterns" value="Expressed in cerebellar cortex and 64 other cell types or tissues"/>
</dbReference>
<dbReference type="GO" id="GO:0005829">
    <property type="term" value="C:cytosol"/>
    <property type="evidence" value="ECO:0007669"/>
    <property type="project" value="Ensembl"/>
</dbReference>
<dbReference type="GO" id="GO:0030425">
    <property type="term" value="C:dendrite"/>
    <property type="evidence" value="ECO:0000250"/>
    <property type="project" value="UniProtKB"/>
</dbReference>
<dbReference type="GO" id="GO:0043204">
    <property type="term" value="C:perikaryon"/>
    <property type="evidence" value="ECO:0007669"/>
    <property type="project" value="UniProtKB-SubCell"/>
</dbReference>
<dbReference type="GO" id="GO:0005886">
    <property type="term" value="C:plasma membrane"/>
    <property type="evidence" value="ECO:0000250"/>
    <property type="project" value="UniProtKB"/>
</dbReference>
<dbReference type="GO" id="GO:0042803">
    <property type="term" value="F:protein homodimerization activity"/>
    <property type="evidence" value="ECO:0000250"/>
    <property type="project" value="UniProtKB"/>
</dbReference>
<dbReference type="GO" id="GO:0006811">
    <property type="term" value="P:monoatomic ion transport"/>
    <property type="evidence" value="ECO:0007669"/>
    <property type="project" value="InterPro"/>
</dbReference>
<dbReference type="GO" id="GO:0055085">
    <property type="term" value="P:transmembrane transport"/>
    <property type="evidence" value="ECO:0007669"/>
    <property type="project" value="InterPro"/>
</dbReference>
<dbReference type="FunFam" id="1.20.120.350:FF:000041">
    <property type="entry name" value="Transmembrane protein 266"/>
    <property type="match status" value="1"/>
</dbReference>
<dbReference type="Gene3D" id="1.20.120.350">
    <property type="entry name" value="Voltage-gated potassium channels. Chain C"/>
    <property type="match status" value="1"/>
</dbReference>
<dbReference type="InterPro" id="IPR005821">
    <property type="entry name" value="Ion_trans_dom"/>
</dbReference>
<dbReference type="InterPro" id="IPR042857">
    <property type="entry name" value="TMEM266"/>
</dbReference>
<dbReference type="InterPro" id="IPR027359">
    <property type="entry name" value="Volt_channel_dom_sf"/>
</dbReference>
<dbReference type="PANTHER" id="PTHR46842">
    <property type="entry name" value="TRANSMEMBRANE PROTEIN 266"/>
    <property type="match status" value="1"/>
</dbReference>
<dbReference type="PANTHER" id="PTHR46842:SF1">
    <property type="entry name" value="TRANSMEMBRANE PROTEIN 266"/>
    <property type="match status" value="1"/>
</dbReference>
<dbReference type="Pfam" id="PF00520">
    <property type="entry name" value="Ion_trans"/>
    <property type="match status" value="1"/>
</dbReference>
<dbReference type="SUPFAM" id="SSF81324">
    <property type="entry name" value="Voltage-gated potassium channels"/>
    <property type="match status" value="1"/>
</dbReference>
<organism>
    <name type="scientific">Mus musculus</name>
    <name type="common">Mouse</name>
    <dbReference type="NCBI Taxonomy" id="10090"/>
    <lineage>
        <taxon>Eukaryota</taxon>
        <taxon>Metazoa</taxon>
        <taxon>Chordata</taxon>
        <taxon>Craniata</taxon>
        <taxon>Vertebrata</taxon>
        <taxon>Euteleostomi</taxon>
        <taxon>Mammalia</taxon>
        <taxon>Eutheria</taxon>
        <taxon>Euarchontoglires</taxon>
        <taxon>Glires</taxon>
        <taxon>Rodentia</taxon>
        <taxon>Myomorpha</taxon>
        <taxon>Muroidea</taxon>
        <taxon>Muridae</taxon>
        <taxon>Murinae</taxon>
        <taxon>Mus</taxon>
        <taxon>Mus</taxon>
    </lineage>
</organism>
<comment type="function">
    <text evidence="1">Voltage-sensor protein present on the post-synaptic side of glutamatergic mossy fibers and granule cells in the cerebellum. Despite the presence of a voltage-sensor segment, does not form a functional ion channel and its precise role remains unclear. Undergoes both rapid and slow structural rearrangements in response to changes in voltage. Contains a zinc-binding site that can regulate the slow conformational transition.</text>
</comment>
<comment type="subunit">
    <molecule>Isoform 1</molecule>
    <text evidence="5">Homodimer; disulfide-linked.</text>
</comment>
<comment type="subunit">
    <molecule>Isoform 2</molecule>
    <text evidence="5">Homodimer; disulfide-linked.</text>
</comment>
<comment type="subcellular location">
    <subcellularLocation>
        <location evidence="4">Cell projection</location>
        <location evidence="4">Dendrite</location>
    </subcellularLocation>
    <subcellularLocation>
        <location evidence="1">Perikaryon</location>
    </subcellularLocation>
    <text evidence="1">Present in the dendrites and soma of cerebellar granule neurons, but not in their axon.</text>
</comment>
<comment type="subcellular location">
    <molecule>Isoform 1</molecule>
    <subcellularLocation>
        <location evidence="5">Cell membrane</location>
        <topology evidence="2">Multi-pass membrane protein</topology>
    </subcellularLocation>
</comment>
<comment type="subcellular location">
    <molecule>Isoform 2</molecule>
    <subcellularLocation>
        <location evidence="5">Cell membrane</location>
        <topology evidence="2">Multi-pass membrane protein</topology>
    </subcellularLocation>
</comment>
<comment type="alternative products">
    <event type="alternative splicing"/>
    <isoform>
        <id>Q8BZB3-1</id>
        <name>1</name>
        <sequence type="displayed"/>
    </isoform>
    <isoform>
        <id>Q8BZB3-2</id>
        <name>2</name>
        <sequence type="described" ref="VSP_022109 VSP_022110 VSP_019514 VSP_019515"/>
    </isoform>
</comment>
<comment type="tissue specificity">
    <text evidence="4">In brain, present in the granule layer of the cerebellar cortex (PubMed:25165868). Localizes on the post-synaptic side of glutamatergic mossy fibers and granule cells in the cerebellum (at protein level) (PubMed:25165868).</text>
</comment>
<comment type="tissue specificity">
    <molecule>Isoform 1</molecule>
    <text evidence="5">Predominantly expressed in granule cells in cerebellum (at protein level) (PubMed:35574701).</text>
</comment>
<comment type="tissue specificity">
    <molecule>Isoform 2</molecule>
    <text evidence="5">Predominantly expressed in granule cells in cerebellum (at protein level) (PubMed:35574701).</text>
</comment>
<comment type="domain">
    <text evidence="1">The transmembrane segment S4 functions as a voltage-sensor and is characterized by a series of positively charged amino acids at every third position. Transplantation of the transmembrane segment S4 into HVCN1, generates a functional voltage-activated proton channel.</text>
</comment>
<comment type="domain">
    <text evidence="5">The coiled coil mediates homodimerization.</text>
</comment>
<comment type="disruption phenotype">
    <text evidence="5">TMEM266-deficient mice show no significant difference in rota-rod test and gait analysis but show a significant reduction in stereotypic behaviors.</text>
</comment>
<gene>
    <name evidence="8" type="primary">Tmem266</name>
</gene>
<accession>Q8BZB3</accession>
<accession>B1B1B3</accession>
<accession>Q6NVG3</accession>
<protein>
    <recommendedName>
        <fullName evidence="7">Transmembrane protein 266</fullName>
    </recommendedName>
</protein>